<feature type="chain" id="PRO_1000199141" description="Histidine--tRNA ligase">
    <location>
        <begin position="1"/>
        <end position="501"/>
    </location>
</feature>
<proteinExistence type="inferred from homology"/>
<protein>
    <recommendedName>
        <fullName evidence="1">Histidine--tRNA ligase</fullName>
        <ecNumber evidence="1">6.1.1.21</ecNumber>
    </recommendedName>
    <alternativeName>
        <fullName evidence="1">Histidyl-tRNA synthetase</fullName>
        <shortName evidence="1">HisRS</shortName>
    </alternativeName>
</protein>
<accession>B8ER30</accession>
<evidence type="ECO:0000255" key="1">
    <source>
        <dbReference type="HAMAP-Rule" id="MF_00127"/>
    </source>
</evidence>
<organism>
    <name type="scientific">Methylocella silvestris (strain DSM 15510 / CIP 108128 / LMG 27833 / NCIMB 13906 / BL2)</name>
    <dbReference type="NCBI Taxonomy" id="395965"/>
    <lineage>
        <taxon>Bacteria</taxon>
        <taxon>Pseudomonadati</taxon>
        <taxon>Pseudomonadota</taxon>
        <taxon>Alphaproteobacteria</taxon>
        <taxon>Hyphomicrobiales</taxon>
        <taxon>Beijerinckiaceae</taxon>
        <taxon>Methylocella</taxon>
    </lineage>
</organism>
<name>SYH_METSB</name>
<sequence length="501" mass="53987">MTDDKTTPARASAKLPRGFGDRGPAEIAATEKMLAAIRASYELYGFEAVETPFIEFTDALGKFLPDLDRPNEGVFSFKDDDESWLSLRYDLTAPLARFVAENFDKLPKPYRSYRAGYVFRNEKPGPGRFRQFMQFDADTVGAPSVAADAEMCMMAADTLERLGVKRGDYVIKVNNRKVLDGVLEAIGLGGEENAGRRMTVLRAIDKLDKFGPEGVALLLGPGRKDESGDFTKGAGLERTAVERVLNYVAAQGEGTAQMLGVLRASVAGSQRGEEGVAELAEIAALIDAAGFSARIRIDPSVVRGLEYYTGPVFEAELTFEVQGEDGKPVRFGSIGGGGRYDGLVGRFRGENVPATGFSIGVSRLYSALKAVGSPIVSAASQPGPVVVLVLDREHLARYQGFVTALRSADIRAELYLGGSGMNAQLKYADKRGSLCAVIQGSNERDHAEGARVTIRDLALGAELAGASKDRADYLELRAKAQFTVAEQNLVDAVREVMARRS</sequence>
<comment type="catalytic activity">
    <reaction evidence="1">
        <text>tRNA(His) + L-histidine + ATP = L-histidyl-tRNA(His) + AMP + diphosphate + H(+)</text>
        <dbReference type="Rhea" id="RHEA:17313"/>
        <dbReference type="Rhea" id="RHEA-COMP:9665"/>
        <dbReference type="Rhea" id="RHEA-COMP:9689"/>
        <dbReference type="ChEBI" id="CHEBI:15378"/>
        <dbReference type="ChEBI" id="CHEBI:30616"/>
        <dbReference type="ChEBI" id="CHEBI:33019"/>
        <dbReference type="ChEBI" id="CHEBI:57595"/>
        <dbReference type="ChEBI" id="CHEBI:78442"/>
        <dbReference type="ChEBI" id="CHEBI:78527"/>
        <dbReference type="ChEBI" id="CHEBI:456215"/>
        <dbReference type="EC" id="6.1.1.21"/>
    </reaction>
</comment>
<comment type="subunit">
    <text evidence="1">Homodimer.</text>
</comment>
<comment type="subcellular location">
    <subcellularLocation>
        <location evidence="1">Cytoplasm</location>
    </subcellularLocation>
</comment>
<comment type="similarity">
    <text evidence="1">Belongs to the class-II aminoacyl-tRNA synthetase family.</text>
</comment>
<gene>
    <name evidence="1" type="primary">hisS</name>
    <name type="ordered locus">Msil_0805</name>
</gene>
<keyword id="KW-0030">Aminoacyl-tRNA synthetase</keyword>
<keyword id="KW-0067">ATP-binding</keyword>
<keyword id="KW-0963">Cytoplasm</keyword>
<keyword id="KW-0436">Ligase</keyword>
<keyword id="KW-0547">Nucleotide-binding</keyword>
<keyword id="KW-0648">Protein biosynthesis</keyword>
<keyword id="KW-1185">Reference proteome</keyword>
<dbReference type="EC" id="6.1.1.21" evidence="1"/>
<dbReference type="EMBL" id="CP001280">
    <property type="protein sequence ID" value="ACK49775.1"/>
    <property type="molecule type" value="Genomic_DNA"/>
</dbReference>
<dbReference type="RefSeq" id="WP_012589845.1">
    <property type="nucleotide sequence ID" value="NC_011666.1"/>
</dbReference>
<dbReference type="SMR" id="B8ER30"/>
<dbReference type="STRING" id="395965.Msil_0805"/>
<dbReference type="KEGG" id="msl:Msil_0805"/>
<dbReference type="eggNOG" id="COG0124">
    <property type="taxonomic scope" value="Bacteria"/>
</dbReference>
<dbReference type="HOGENOM" id="CLU_025113_3_2_5"/>
<dbReference type="OrthoDB" id="9800814at2"/>
<dbReference type="Proteomes" id="UP000002257">
    <property type="component" value="Chromosome"/>
</dbReference>
<dbReference type="GO" id="GO:0005737">
    <property type="term" value="C:cytoplasm"/>
    <property type="evidence" value="ECO:0007669"/>
    <property type="project" value="UniProtKB-SubCell"/>
</dbReference>
<dbReference type="GO" id="GO:0005524">
    <property type="term" value="F:ATP binding"/>
    <property type="evidence" value="ECO:0007669"/>
    <property type="project" value="UniProtKB-UniRule"/>
</dbReference>
<dbReference type="GO" id="GO:0004821">
    <property type="term" value="F:histidine-tRNA ligase activity"/>
    <property type="evidence" value="ECO:0007669"/>
    <property type="project" value="UniProtKB-UniRule"/>
</dbReference>
<dbReference type="GO" id="GO:0006427">
    <property type="term" value="P:histidyl-tRNA aminoacylation"/>
    <property type="evidence" value="ECO:0007669"/>
    <property type="project" value="UniProtKB-UniRule"/>
</dbReference>
<dbReference type="CDD" id="cd00773">
    <property type="entry name" value="HisRS-like_core"/>
    <property type="match status" value="1"/>
</dbReference>
<dbReference type="Gene3D" id="3.40.50.800">
    <property type="entry name" value="Anticodon-binding domain"/>
    <property type="match status" value="1"/>
</dbReference>
<dbReference type="Gene3D" id="3.30.930.10">
    <property type="entry name" value="Bira Bifunctional Protein, Domain 2"/>
    <property type="match status" value="1"/>
</dbReference>
<dbReference type="HAMAP" id="MF_00127">
    <property type="entry name" value="His_tRNA_synth"/>
    <property type="match status" value="1"/>
</dbReference>
<dbReference type="InterPro" id="IPR006195">
    <property type="entry name" value="aa-tRNA-synth_II"/>
</dbReference>
<dbReference type="InterPro" id="IPR045864">
    <property type="entry name" value="aa-tRNA-synth_II/BPL/LPL"/>
</dbReference>
<dbReference type="InterPro" id="IPR004154">
    <property type="entry name" value="Anticodon-bd"/>
</dbReference>
<dbReference type="InterPro" id="IPR036621">
    <property type="entry name" value="Anticodon-bd_dom_sf"/>
</dbReference>
<dbReference type="InterPro" id="IPR015807">
    <property type="entry name" value="His-tRNA-ligase"/>
</dbReference>
<dbReference type="InterPro" id="IPR041715">
    <property type="entry name" value="HisRS-like_core"/>
</dbReference>
<dbReference type="InterPro" id="IPR004516">
    <property type="entry name" value="HisRS/HisZ"/>
</dbReference>
<dbReference type="NCBIfam" id="TIGR00442">
    <property type="entry name" value="hisS"/>
    <property type="match status" value="1"/>
</dbReference>
<dbReference type="PANTHER" id="PTHR11476:SF7">
    <property type="entry name" value="HISTIDINE--TRNA LIGASE"/>
    <property type="match status" value="1"/>
</dbReference>
<dbReference type="PANTHER" id="PTHR11476">
    <property type="entry name" value="HISTIDYL-TRNA SYNTHETASE"/>
    <property type="match status" value="1"/>
</dbReference>
<dbReference type="Pfam" id="PF03129">
    <property type="entry name" value="HGTP_anticodon"/>
    <property type="match status" value="1"/>
</dbReference>
<dbReference type="Pfam" id="PF13393">
    <property type="entry name" value="tRNA-synt_His"/>
    <property type="match status" value="1"/>
</dbReference>
<dbReference type="PIRSF" id="PIRSF001549">
    <property type="entry name" value="His-tRNA_synth"/>
    <property type="match status" value="1"/>
</dbReference>
<dbReference type="SUPFAM" id="SSF52954">
    <property type="entry name" value="Class II aaRS ABD-related"/>
    <property type="match status" value="1"/>
</dbReference>
<dbReference type="SUPFAM" id="SSF55681">
    <property type="entry name" value="Class II aaRS and biotin synthetases"/>
    <property type="match status" value="1"/>
</dbReference>
<dbReference type="PROSITE" id="PS50862">
    <property type="entry name" value="AA_TRNA_LIGASE_II"/>
    <property type="match status" value="1"/>
</dbReference>
<reference key="1">
    <citation type="journal article" date="2010" name="J. Bacteriol.">
        <title>Complete genome sequence of the aerobic facultative methanotroph Methylocella silvestris BL2.</title>
        <authorList>
            <person name="Chen Y."/>
            <person name="Crombie A."/>
            <person name="Rahman M.T."/>
            <person name="Dedysh S.N."/>
            <person name="Liesack W."/>
            <person name="Stott M.B."/>
            <person name="Alam M."/>
            <person name="Theisen A.R."/>
            <person name="Murrell J.C."/>
            <person name="Dunfield P.F."/>
        </authorList>
    </citation>
    <scope>NUCLEOTIDE SEQUENCE [LARGE SCALE GENOMIC DNA]</scope>
    <source>
        <strain>DSM 15510 / CIP 108128 / LMG 27833 / NCIMB 13906 / BL2</strain>
    </source>
</reference>